<protein>
    <recommendedName>
        <fullName>Chemoheterotroph-specific protein</fullName>
    </recommendedName>
</protein>
<name>CHP_THIDL</name>
<sequence>MLTYTGTVINVQTFAAKPDP</sequence>
<feature type="chain" id="PRO_0000089652" description="Chemoheterotroph-specific protein">
    <location>
        <begin position="1"/>
        <end position="20" status="greater than"/>
    </location>
</feature>
<feature type="non-terminal residue">
    <location>
        <position position="20"/>
    </location>
</feature>
<comment type="miscellaneous">
    <text>Found specifically in cells cultured chemoheterotrophically.</text>
</comment>
<reference key="1">
    <citation type="submission" date="1995-09" db="UniProtKB">
        <authorList>
            <person name="Marin I."/>
            <person name="Amaro A.M."/>
            <person name="Jerez C.A."/>
            <person name="Amils R."/>
            <person name="Abad J.P."/>
        </authorList>
    </citation>
    <scope>PROTEIN SEQUENCE</scope>
    <source>
        <strain>DSM 5494</strain>
    </source>
</reference>
<keyword id="KW-0903">Direct protein sequencing</keyword>
<accession>P80486</accession>
<proteinExistence type="evidence at protein level"/>
<organism>
    <name type="scientific">Thiomonas delicata</name>
    <name type="common">Thiomonas cuprina</name>
    <dbReference type="NCBI Taxonomy" id="364030"/>
    <lineage>
        <taxon>Bacteria</taxon>
        <taxon>Pseudomonadati</taxon>
        <taxon>Pseudomonadota</taxon>
        <taxon>Betaproteobacteria</taxon>
        <taxon>Burkholderiales</taxon>
        <taxon>Thiomonas</taxon>
    </lineage>
</organism>